<gene>
    <name type="primary">GP</name>
</gene>
<organismHost>
    <name type="scientific">Frankliniella occidentalis</name>
    <name type="common">Western flower thrips</name>
    <name type="synonym">Euthrips occidentalis</name>
    <dbReference type="NCBI Taxonomy" id="133901"/>
</organismHost>
<organismHost>
    <name type="scientific">Scirtothrips dorsalis</name>
    <name type="common">Chilli thrips</name>
    <dbReference type="NCBI Taxonomy" id="163899"/>
</organismHost>
<organismHost>
    <name type="scientific">Solanum lycopersicum</name>
    <name type="common">Tomato</name>
    <name type="synonym">Lycopersicon esculentum</name>
    <dbReference type="NCBI Taxonomy" id="4081"/>
</organismHost>
<organismHost>
    <name type="scientific">Thrips tabaci</name>
    <dbReference type="NCBI Taxonomy" id="161014"/>
</organismHost>
<sequence>MRILKLLELVVKVSLFTIALSSVLLAFLTFRATDAKVEIIRGDHPEIYDDSAENEVPTAASIQREAILETLTNLVLESRTPGTRQIREEKLTIPISTEPATQKTISVLDLPNNCLNASSLKCEIKGISTYNVYYQVENNGVIYSSVSDSAEGLEKCDNSLNLPKRFSKVPVIPITKLDNKRHFSVGTNFFIPESLTQDNYPITYNSYPTNGTVSLQTVKLSGDCKITKSNFANPYTVSITSPEKIMGYLIKKPGENVEHKVIAFSGSASITFTEEMLDGEHNLLCGDKSAKIPKTNKRVRDCIIKYSKSIYKQTACINFSWIRLILIALLIYFPIRWLVNKTTKPLFLWYDLMGLITYPVLLLINCLWKYFPFKCSNCGNLCIVTRECTKVCICNKSKASKEHSSECPILSKEADHDYNKHKWTSMEWFHLIVNTKLSLSLLKFVTEILIGLVILSQIPMSMAQTTQCLSGCFYVPGCPFLVTSKFEKCPEKDQCYCNVKEDKIIESIFGTNIVIEGPNDCIENQNCIARPSIDNLIKCRLGCEYLDLFQNKPLYNGFSDYTESSLGLTSVGLYEAKRLRNGIIDSYNRTDKISGMIAGDSLDKNETSIPENILPRQSLIFDSVVDGKYRYMIEQSLLGGGGTIFMLNDKTSETAKKFVIYIKSVGIHHEVSEEYTTAPIQSTHTDFYPTCIGNCDTCRKNQALTGFQDFCITPTSYWGCEEAWCFAINEGATCGFCRNIYDIDKSYRIYSVLKSTIVADVCISGILGGQCSRITEEVPYENTLFQADIQSDLHNDGITIGELIAHGPDSHIYSGNIANLNDPVKMFGHPQLTHDGVPIFTKKTLEGDDMSWDCAATGKKSVTIKTCGYDTYRFRSGLEQISDIPVSFKDFSSFFLEKSFSLGELKIVVDLPSDLFKVVPKKPSITSTSLNCNGCLLCGQGLSCILEFFSDLTFSTAISIDACSLSTYQLAVKKGSNKYNITMFCSANPDKKKMTLYPEGNPDIPVEVLVNNVIIEEPENIIDQNDEYAHEEQQYNSDSSAWGFWDYIKSPFNFIASYFGSFFDTIRVVLLIAFIFLVIYFCSILTSICKGYVKHKSYKSRSKIEDDDEPEIKAPMLMKDTMTRRRPPMDFSHLV</sequence>
<dbReference type="EMBL" id="AF208497">
    <property type="protein sequence ID" value="AAF80979.1"/>
    <property type="molecule type" value="Genomic_RNA"/>
</dbReference>
<dbReference type="SMR" id="Q9IKB7"/>
<dbReference type="GlyCosmos" id="Q9IKB7">
    <property type="glycosylation" value="6 sites, No reported glycans"/>
</dbReference>
<dbReference type="GO" id="GO:0044167">
    <property type="term" value="C:host cell endoplasmic reticulum membrane"/>
    <property type="evidence" value="ECO:0007669"/>
    <property type="project" value="UniProtKB-SubCell"/>
</dbReference>
<dbReference type="GO" id="GO:0044178">
    <property type="term" value="C:host cell Golgi membrane"/>
    <property type="evidence" value="ECO:0007669"/>
    <property type="project" value="UniProtKB-SubCell"/>
</dbReference>
<dbReference type="GO" id="GO:0016020">
    <property type="term" value="C:membrane"/>
    <property type="evidence" value="ECO:0007669"/>
    <property type="project" value="UniProtKB-KW"/>
</dbReference>
<dbReference type="GO" id="GO:0055036">
    <property type="term" value="C:virion membrane"/>
    <property type="evidence" value="ECO:0007669"/>
    <property type="project" value="UniProtKB-SubCell"/>
</dbReference>
<dbReference type="GO" id="GO:0039654">
    <property type="term" value="P:fusion of virus membrane with host endosome membrane"/>
    <property type="evidence" value="ECO:0007669"/>
    <property type="project" value="UniProtKB-KW"/>
</dbReference>
<dbReference type="GO" id="GO:0046718">
    <property type="term" value="P:symbiont entry into host cell"/>
    <property type="evidence" value="ECO:0007669"/>
    <property type="project" value="UniProtKB-KW"/>
</dbReference>
<dbReference type="GO" id="GO:0044003">
    <property type="term" value="P:symbiont-mediated perturbation of host process"/>
    <property type="evidence" value="ECO:0007669"/>
    <property type="project" value="InterPro"/>
</dbReference>
<dbReference type="GO" id="GO:0019062">
    <property type="term" value="P:virion attachment to host cell"/>
    <property type="evidence" value="ECO:0007669"/>
    <property type="project" value="UniProtKB-KW"/>
</dbReference>
<dbReference type="InterPro" id="IPR005167">
    <property type="entry name" value="Bunya_G1"/>
</dbReference>
<dbReference type="InterPro" id="IPR014414">
    <property type="entry name" value="M_poly_TospoV"/>
</dbReference>
<dbReference type="Pfam" id="PF03557">
    <property type="entry name" value="Bunya_G1"/>
    <property type="match status" value="1"/>
</dbReference>
<dbReference type="PIRSF" id="PIRSF003960">
    <property type="entry name" value="M_poly_TospoV"/>
    <property type="match status" value="1"/>
</dbReference>
<accession>Q9IKB7</accession>
<comment type="function">
    <molecule>Glycoprotein N</molecule>
    <text evidence="2 3">Forms the spikes present at the surface of the virion together with Glycoprotein C. They are able to attach the virion to a cell receptor and to promote fusion of membranes after endocytosis of the virion (By similarity). Plays a role in virus binding and/or entry into the vector midgut (By similarity).</text>
</comment>
<comment type="function">
    <molecule>Glycoprotein C</molecule>
    <text evidence="2 5">Forms the spikes present at the surface of the virion together with Glycoprotein N. They are able to attach the virion to a cell receptor and to promote fusion of membranes after endocytosis of the virion (By similarity). Probable class II fusion protein (Probable).</text>
</comment>
<comment type="subunit">
    <molecule>Glycoprotein N</molecule>
    <text evidence="3">Homodimer; disulfide-linked. Heterodimer with Glycoprotein C. Interacts with nucleoprotein.</text>
</comment>
<comment type="subunit">
    <molecule>Glycoprotein C</molecule>
    <text evidence="3">Heterodimer with Glycoprotein N. Interacts with nucleoprotein.</text>
</comment>
<comment type="subcellular location">
    <molecule>Glycoprotein N</molecule>
    <subcellularLocation>
        <location evidence="3">Virion membrane</location>
        <topology evidence="3">Single-pass type I membrane protein</topology>
    </subcellularLocation>
    <subcellularLocation>
        <location evidence="3">Host Golgi apparatus membrane</location>
        <topology evidence="3">Single-pass type I membrane protein</topology>
    </subcellularLocation>
    <subcellularLocation>
        <location evidence="3">Host endoplasmic reticulum membrane</location>
        <topology evidence="3">Single-pass type I membrane protein</topology>
    </subcellularLocation>
    <text evidence="3">Glycoprotein C alone is retained in the membrane of the endoplasmic reticulum, but not transported to the Golgi. Coexpression of Glycoprotein C and Glycoprotein N results in efficient transport of Glycoprotein C to the Golgi complex, indicating that their interaction is essential for proper targeting to this organelle, where virion budding occurs.</text>
</comment>
<comment type="subcellular location">
    <molecule>Glycoprotein C</molecule>
    <subcellularLocation>
        <location evidence="3">Virion membrane</location>
        <topology evidence="3">Single-pass type I membrane protein</topology>
    </subcellularLocation>
    <subcellularLocation>
        <location evidence="3">Host Golgi apparatus membrane</location>
        <topology evidence="3">Single-pass type I membrane protein</topology>
    </subcellularLocation>
    <text evidence="3">Inserted into the ER membrane, but is not transported to the Golgi without Glycoprotein N.</text>
</comment>
<comment type="domain">
    <text evidence="3">The cell attachment site present in these glycoproteins may help in the adhesion of virus to cells.</text>
</comment>
<comment type="domain">
    <molecule>Glycoprotein N</molecule>
    <text evidence="3">The cytoplasmic C-terminus probably contains a Golgi retention signal. The transmembrane domain and C-terminus of Glycoprotein N allow Glycoprotein C to exit the ER and traffic to the Golgi.</text>
</comment>
<comment type="PTM">
    <molecule>Envelopment polyprotein</molecule>
    <text evidence="3">Specific enzymatic cleavages in vivo yield mature proteins including Glycoprotein N and Glycoprotein C.</text>
</comment>
<comment type="PTM">
    <molecule>Glycoprotein N</molecule>
    <text evidence="3">Glycosylated with O-linked glycans. Glycosylation is essential for proper subcellular location.</text>
</comment>
<comment type="PTM">
    <molecule>Glycoprotein C</molecule>
    <text evidence="3">Cleaved at acidic pH.</text>
</comment>
<comment type="miscellaneous">
    <text evidence="5">Tospoviruses are transmitted from plant to plant by thrips as the insect vector.</text>
</comment>
<comment type="similarity">
    <text evidence="5">Belongs to the tospovirus envelope glycoprotein family.</text>
</comment>
<name>GP_TSWVD</name>
<reference key="1">
    <citation type="journal article" date="2001" name="Mol. Plant Microbe Interact.">
        <title>Overcoming host- and pathogen-mediated resistance in tomato and tobacco maps to the M RNA of Tomato spotted wilt virus.</title>
        <authorList>
            <person name="Hoffmann K."/>
            <person name="Qiu W.P."/>
            <person name="Moyer J.W."/>
        </authorList>
    </citation>
    <scope>NUCLEOTIDE SEQUENCE [GENOMIC RNA]</scope>
</reference>
<organism>
    <name type="scientific">Tomato spotted wilt virus (isolate D)</name>
    <name type="common">TSWV</name>
    <dbReference type="NCBI Taxonomy" id="267288"/>
    <lineage>
        <taxon>Viruses</taxon>
        <taxon>Riboviria</taxon>
        <taxon>Orthornavirae</taxon>
        <taxon>Negarnaviricota</taxon>
        <taxon>Polyploviricotina</taxon>
        <taxon>Ellioviricetes</taxon>
        <taxon>Bunyavirales</taxon>
        <taxon>Tospoviridae</taxon>
        <taxon>Orthotospovirus</taxon>
        <taxon>Tomato spotted wilt virus</taxon>
    </lineage>
</organism>
<feature type="signal peptide" evidence="4">
    <location>
        <begin position="1"/>
        <end position="35"/>
    </location>
</feature>
<feature type="chain" id="PRO_0000036862" description="Envelopment polyprotein">
    <location>
        <begin position="36"/>
        <end position="1135"/>
    </location>
</feature>
<feature type="chain" id="PRO_0000036863" description="Glycoprotein N" evidence="1">
    <location>
        <begin position="36"/>
        <end position="484"/>
    </location>
</feature>
<feature type="chain" id="PRO_0000036864" description="Glycoprotein C" evidence="1">
    <location>
        <begin position="485"/>
        <end position="1135"/>
    </location>
</feature>
<feature type="topological domain" description="Lumenal" evidence="4">
    <location>
        <begin position="36"/>
        <end position="314"/>
    </location>
</feature>
<feature type="transmembrane region" description="Helical" evidence="3">
    <location>
        <begin position="315"/>
        <end position="366"/>
    </location>
</feature>
<feature type="topological domain" description="Cytoplasmic" evidence="4">
    <location>
        <begin position="367"/>
        <end position="484"/>
    </location>
</feature>
<feature type="topological domain" description="Lumenal" evidence="4">
    <location>
        <begin position="485"/>
        <end position="1067"/>
    </location>
</feature>
<feature type="transmembrane region" description="Helical" evidence="4">
    <location>
        <begin position="1068"/>
        <end position="1088"/>
    </location>
</feature>
<feature type="topological domain" description="Cytoplasmic" evidence="4">
    <location>
        <begin position="1089"/>
        <end position="1135"/>
    </location>
</feature>
<feature type="region of interest" description="Non-covalent dimerization" evidence="3">
    <location>
        <begin position="177"/>
        <end position="195"/>
    </location>
</feature>
<feature type="region of interest" description="Signal for signal peptide peptidase" evidence="3">
    <location>
        <begin position="437"/>
        <end position="484"/>
    </location>
</feature>
<feature type="short sequence motif" description="Cell attachment site" evidence="4">
    <location>
        <begin position="41"/>
        <end position="43"/>
    </location>
</feature>
<feature type="site" description="Cleavage; by host signal peptidase" evidence="3">
    <location>
        <begin position="484"/>
        <end position="485"/>
    </location>
</feature>
<feature type="glycosylation site" description="N-linked (GlcNAc...) asparagine; by host" evidence="3">
    <location>
        <position position="116"/>
    </location>
</feature>
<feature type="glycosylation site" description="N-linked (GlcNAc...) asparagine; by host" evidence="3">
    <location>
        <position position="210"/>
    </location>
</feature>
<feature type="glycosylation site" description="N-linked (GlcNAc...) asparagine; by host" evidence="4">
    <location>
        <position position="588"/>
    </location>
</feature>
<feature type="glycosylation site" description="N-linked (GlcNAc...) asparagine; by host" evidence="4">
    <location>
        <position position="605"/>
    </location>
</feature>
<feature type="glycosylation site" description="N-linked (GlcNAc...) asparagine; by host" evidence="4">
    <location>
        <position position="980"/>
    </location>
</feature>
<feature type="disulfide bond" evidence="3">
    <location>
        <begin position="122"/>
        <end position="156"/>
    </location>
</feature>
<feature type="disulfide bond" evidence="3">
    <location>
        <begin position="224"/>
        <end position="285"/>
    </location>
</feature>
<feature type="disulfide bond" description="Interchain" evidence="3">
    <location>
        <position position="302"/>
    </location>
</feature>
<keyword id="KW-1015">Disulfide bond</keyword>
<keyword id="KW-1170">Fusion of virus membrane with host endosomal membrane</keyword>
<keyword id="KW-1168">Fusion of virus membrane with host membrane</keyword>
<keyword id="KW-0325">Glycoprotein</keyword>
<keyword id="KW-1038">Host endoplasmic reticulum</keyword>
<keyword id="KW-1040">Host Golgi apparatus</keyword>
<keyword id="KW-1043">Host membrane</keyword>
<keyword id="KW-0945">Host-virus interaction</keyword>
<keyword id="KW-0472">Membrane</keyword>
<keyword id="KW-0732">Signal</keyword>
<keyword id="KW-0812">Transmembrane</keyword>
<keyword id="KW-1133">Transmembrane helix</keyword>
<keyword id="KW-1161">Viral attachment to host cell</keyword>
<keyword id="KW-1162">Viral penetration into host cytoplasm</keyword>
<keyword id="KW-0946">Virion</keyword>
<keyword id="KW-1160">Virus entry into host cell</keyword>
<evidence type="ECO:0000250" key="1"/>
<evidence type="ECO:0000250" key="2">
    <source>
        <dbReference type="UniProtKB" id="P08668"/>
    </source>
</evidence>
<evidence type="ECO:0000250" key="3">
    <source>
        <dbReference type="UniProtKB" id="P36291"/>
    </source>
</evidence>
<evidence type="ECO:0000255" key="4"/>
<evidence type="ECO:0000305" key="5"/>
<protein>
    <recommendedName>
        <fullName>Envelopment polyprotein</fullName>
    </recommendedName>
    <alternativeName>
        <fullName>M polyprotein</fullName>
    </alternativeName>
    <component>
        <recommendedName>
            <fullName evidence="3">Glycoprotein N</fullName>
            <shortName>Gn</shortName>
        </recommendedName>
        <alternativeName>
            <fullName>Glycoprotein G2</fullName>
        </alternativeName>
    </component>
    <component>
        <recommendedName>
            <fullName evidence="3">Glycoprotein C</fullName>
            <shortName>Gc</shortName>
        </recommendedName>
        <alternativeName>
            <fullName>Glycoprotein G1</fullName>
        </alternativeName>
    </component>
</protein>
<proteinExistence type="inferred from homology"/>